<geneLocation type="plasmid">
    <name>pSAM2</name>
</geneLocation>
<gene>
    <name type="primary">repSA</name>
</gene>
<feature type="chain" id="PRO_0000068316" description="Replication initiator protein">
    <location>
        <begin position="1"/>
        <end position="459"/>
    </location>
</feature>
<sequence length="459" mass="50572">MPDTLLDPTTLGDLLRVASAPDYARWEDQIRRTGAGANPIHLTGWTLHKDKTTGETLHHYTTAVEPGGRLRLACGNRRASRCPSCAWTYAGDTYHLIRAGLAGDDRRDIPATVRDHPRVFATLTAPSFGPVHNRPDHGTCRCGTRHAPDAPELGAALDPTTYDYAGAVLFNNHAGQLWQRFTTRLRREIAARAGLSRRELPDCLRVSYGKVAEFQKRGALHFHAVIRLDGPEGPDTTPPAWATVALLADAIRAAAAHSYTSVSVPAAEDQPARTFRWGTQLDVRPVKAFGDGSDITEQAVASYVAKYATKAAENTGTLDRRIGELSELDRHDVPDHTRRLVEACKMLDPLYPERRLWAWAHMLGFRGHFSSKSRRYSTTLGALRQARADYRAAQEHAALALDDREPDTVLVLADWQYAGHGHTPGESVLAATIARNLQLNRETAREAVRDQLDQEGVAA</sequence>
<organism>
    <name type="scientific">Streptomyces ambofaciens</name>
    <dbReference type="NCBI Taxonomy" id="1889"/>
    <lineage>
        <taxon>Bacteria</taxon>
        <taxon>Bacillati</taxon>
        <taxon>Actinomycetota</taxon>
        <taxon>Actinomycetes</taxon>
        <taxon>Kitasatosporales</taxon>
        <taxon>Streptomycetaceae</taxon>
        <taxon>Streptomyces</taxon>
    </lineage>
</organism>
<accession>P36891</accession>
<name>REPS_STRAM</name>
<comment type="function">
    <text>Essential for pSAM2 replication.</text>
</comment>
<reference key="1">
    <citation type="journal article" date="1994" name="Plasmid">
        <title>Identification of a gene encoding the replication initiator protein of the Streptomyces integrating element, pSAM2.</title>
        <authorList>
            <person name="Hagege J.M."/>
            <person name="Boccard F."/>
            <person name="Smokvina T."/>
            <person name="Pernodet J.L."/>
            <person name="Friedmann A."/>
            <person name="Guerineau M."/>
        </authorList>
    </citation>
    <scope>NUCLEOTIDE SEQUENCE [GENOMIC DNA]</scope>
    <source>
        <strain>ATCC 23877 / 3486 / DSM 40053 / JCM 4204 / NBRC 12836 / NRRL B-2516</strain>
    </source>
</reference>
<protein>
    <recommendedName>
        <fullName>Replication initiator protein</fullName>
    </recommendedName>
</protein>
<dbReference type="EMBL" id="Z19594">
    <property type="protein sequence ID" value="CAA79648.1"/>
    <property type="molecule type" value="Genomic_DNA"/>
</dbReference>
<dbReference type="PIR" id="S33424">
    <property type="entry name" value="S33424"/>
</dbReference>
<dbReference type="OMA" id="CADCYDY"/>
<dbReference type="GO" id="GO:0006260">
    <property type="term" value="P:DNA replication"/>
    <property type="evidence" value="ECO:0007669"/>
    <property type="project" value="UniProtKB-KW"/>
</dbReference>
<dbReference type="InterPro" id="IPR046828">
    <property type="entry name" value="RepSA"/>
</dbReference>
<dbReference type="InterPro" id="IPR048241">
    <property type="entry name" value="RepSA_streptomyces"/>
</dbReference>
<dbReference type="NCBIfam" id="NF041486">
    <property type="entry name" value="rep_init_RepSA"/>
    <property type="match status" value="1"/>
</dbReference>
<dbReference type="Pfam" id="PF20199">
    <property type="entry name" value="RepSA"/>
    <property type="match status" value="1"/>
</dbReference>
<keyword id="KW-0235">DNA replication</keyword>
<keyword id="KW-0614">Plasmid</keyword>
<proteinExistence type="predicted"/>